<dbReference type="EMBL" id="BX572607">
    <property type="protein sequence ID" value="CAE29970.1"/>
    <property type="molecule type" value="Genomic_DNA"/>
</dbReference>
<dbReference type="RefSeq" id="WP_011160062.1">
    <property type="nucleotide sequence ID" value="NZ_CP116810.1"/>
</dbReference>
<dbReference type="STRING" id="258594.RPA4530"/>
<dbReference type="eggNOG" id="COG5328">
    <property type="taxonomic scope" value="Bacteria"/>
</dbReference>
<dbReference type="HOGENOM" id="CLU_112904_0_0_5"/>
<dbReference type="PhylomeDB" id="Q6N178"/>
<dbReference type="HAMAP" id="MF_00678">
    <property type="entry name" value="UPF0262"/>
    <property type="match status" value="1"/>
</dbReference>
<dbReference type="InterPro" id="IPR008321">
    <property type="entry name" value="UCP032146"/>
</dbReference>
<dbReference type="NCBIfam" id="NF002769">
    <property type="entry name" value="PRK02853.1"/>
    <property type="match status" value="1"/>
</dbReference>
<dbReference type="Pfam" id="PF06793">
    <property type="entry name" value="UPF0262"/>
    <property type="match status" value="1"/>
</dbReference>
<dbReference type="PIRSF" id="PIRSF032146">
    <property type="entry name" value="UCP032146"/>
    <property type="match status" value="1"/>
</dbReference>
<name>Y4530_RHOPA</name>
<evidence type="ECO:0000255" key="1">
    <source>
        <dbReference type="HAMAP-Rule" id="MF_00678"/>
    </source>
</evidence>
<comment type="similarity">
    <text evidence="1">Belongs to the UPF0262 family.</text>
</comment>
<feature type="chain" id="PRO_0000314210" description="UPF0262 protein RPA4530">
    <location>
        <begin position="1"/>
        <end position="163"/>
    </location>
</feature>
<accession>Q6N178</accession>
<organism>
    <name type="scientific">Rhodopseudomonas palustris (strain ATCC BAA-98 / CGA009)</name>
    <dbReference type="NCBI Taxonomy" id="258594"/>
    <lineage>
        <taxon>Bacteria</taxon>
        <taxon>Pseudomonadati</taxon>
        <taxon>Pseudomonadota</taxon>
        <taxon>Alphaproteobacteria</taxon>
        <taxon>Hyphomicrobiales</taxon>
        <taxon>Nitrobacteraceae</taxon>
        <taxon>Rhodopseudomonas</taxon>
    </lineage>
</organism>
<reference key="1">
    <citation type="journal article" date="2004" name="Nat. Biotechnol.">
        <title>Complete genome sequence of the metabolically versatile photosynthetic bacterium Rhodopseudomonas palustris.</title>
        <authorList>
            <person name="Larimer F.W."/>
            <person name="Chain P."/>
            <person name="Hauser L."/>
            <person name="Lamerdin J.E."/>
            <person name="Malfatti S."/>
            <person name="Do L."/>
            <person name="Land M.L."/>
            <person name="Pelletier D.A."/>
            <person name="Beatty J.T."/>
            <person name="Lang A.S."/>
            <person name="Tabita F.R."/>
            <person name="Gibson J.L."/>
            <person name="Hanson T.E."/>
            <person name="Bobst C."/>
            <person name="Torres y Torres J.L."/>
            <person name="Peres C."/>
            <person name="Harrison F.H."/>
            <person name="Gibson J."/>
            <person name="Harwood C.S."/>
        </authorList>
    </citation>
    <scope>NUCLEOTIDE SEQUENCE [LARGE SCALE GENOMIC DNA]</scope>
    <source>
        <strain>ATCC BAA-98 / CGA009</strain>
    </source>
</reference>
<gene>
    <name type="ordered locus">RPA4530</name>
</gene>
<sequence>MSNPEPDDSNNRIVAVTLDEESIGRSGPDIEHERAIAIYDLVEKNLFAPEGAGEGPFTLHIGITGNRLMFDIRREDGAPVITHLLSLTPFRRIVKDYFMICDSYYQAIRTATPDKIEAIDMGRRGIHDEGSRTLQERLAGKVRIDFETARRLFTLISVLHWKG</sequence>
<proteinExistence type="inferred from homology"/>
<protein>
    <recommendedName>
        <fullName evidence="1">UPF0262 protein RPA4530</fullName>
    </recommendedName>
</protein>